<protein>
    <recommendedName>
        <fullName evidence="1">5'-nucleotidase SurE</fullName>
        <ecNumber evidence="1">3.1.3.5</ecNumber>
    </recommendedName>
    <alternativeName>
        <fullName evidence="1">Nucleoside 5'-monophosphate phosphohydrolase</fullName>
    </alternativeName>
</protein>
<accession>Q82VV9</accession>
<sequence>MRILLSNDDGYFAPGIANLAKVLLEIADVTVVAPERDRSGASNSLTLDRPLSLHKSHNGFYYVNGTPTDCVHLAVTGMLDELPDMVISGINDGANMGDDTVYSGTVAAATEGFLLGLPSIAVSLVSMSRGNFPTAARIVVDLVKRFTENRFHIPILLNVNVPDVPYDELQGVEVTRLGRRHKAESVIKYQTPRGETVYWVGAAGAAQDAGEGTDFFALQNNRVSITPLQIDLTRYDQIGYVKNWLTL</sequence>
<organism>
    <name type="scientific">Nitrosomonas europaea (strain ATCC 19718 / CIP 103999 / KCTC 2705 / NBRC 14298)</name>
    <dbReference type="NCBI Taxonomy" id="228410"/>
    <lineage>
        <taxon>Bacteria</taxon>
        <taxon>Pseudomonadati</taxon>
        <taxon>Pseudomonadota</taxon>
        <taxon>Betaproteobacteria</taxon>
        <taxon>Nitrosomonadales</taxon>
        <taxon>Nitrosomonadaceae</taxon>
        <taxon>Nitrosomonas</taxon>
    </lineage>
</organism>
<name>SURE_NITEU</name>
<dbReference type="EC" id="3.1.3.5" evidence="1"/>
<dbReference type="EMBL" id="AL954747">
    <property type="protein sequence ID" value="CAD84861.1"/>
    <property type="molecule type" value="Genomic_DNA"/>
</dbReference>
<dbReference type="RefSeq" id="WP_011111559.1">
    <property type="nucleotide sequence ID" value="NC_004757.1"/>
</dbReference>
<dbReference type="SMR" id="Q82VV9"/>
<dbReference type="STRING" id="228410.NE0950"/>
<dbReference type="GeneID" id="87104142"/>
<dbReference type="KEGG" id="neu:NE0950"/>
<dbReference type="eggNOG" id="COG0496">
    <property type="taxonomic scope" value="Bacteria"/>
</dbReference>
<dbReference type="HOGENOM" id="CLU_045192_1_2_4"/>
<dbReference type="OrthoDB" id="9780815at2"/>
<dbReference type="PhylomeDB" id="Q82VV9"/>
<dbReference type="Proteomes" id="UP000001416">
    <property type="component" value="Chromosome"/>
</dbReference>
<dbReference type="GO" id="GO:0005737">
    <property type="term" value="C:cytoplasm"/>
    <property type="evidence" value="ECO:0007669"/>
    <property type="project" value="UniProtKB-SubCell"/>
</dbReference>
<dbReference type="GO" id="GO:0008254">
    <property type="term" value="F:3'-nucleotidase activity"/>
    <property type="evidence" value="ECO:0007669"/>
    <property type="project" value="TreeGrafter"/>
</dbReference>
<dbReference type="GO" id="GO:0008253">
    <property type="term" value="F:5'-nucleotidase activity"/>
    <property type="evidence" value="ECO:0007669"/>
    <property type="project" value="UniProtKB-UniRule"/>
</dbReference>
<dbReference type="GO" id="GO:0004309">
    <property type="term" value="F:exopolyphosphatase activity"/>
    <property type="evidence" value="ECO:0007669"/>
    <property type="project" value="TreeGrafter"/>
</dbReference>
<dbReference type="GO" id="GO:0046872">
    <property type="term" value="F:metal ion binding"/>
    <property type="evidence" value="ECO:0007669"/>
    <property type="project" value="UniProtKB-UniRule"/>
</dbReference>
<dbReference type="GO" id="GO:0000166">
    <property type="term" value="F:nucleotide binding"/>
    <property type="evidence" value="ECO:0007669"/>
    <property type="project" value="UniProtKB-KW"/>
</dbReference>
<dbReference type="FunFam" id="3.40.1210.10:FF:000001">
    <property type="entry name" value="5'/3'-nucleotidase SurE"/>
    <property type="match status" value="1"/>
</dbReference>
<dbReference type="Gene3D" id="3.40.1210.10">
    <property type="entry name" value="Survival protein SurE-like phosphatase/nucleotidase"/>
    <property type="match status" value="1"/>
</dbReference>
<dbReference type="HAMAP" id="MF_00060">
    <property type="entry name" value="SurE"/>
    <property type="match status" value="1"/>
</dbReference>
<dbReference type="InterPro" id="IPR030048">
    <property type="entry name" value="SurE"/>
</dbReference>
<dbReference type="InterPro" id="IPR002828">
    <property type="entry name" value="SurE-like_Pase/nucleotidase"/>
</dbReference>
<dbReference type="InterPro" id="IPR036523">
    <property type="entry name" value="SurE-like_sf"/>
</dbReference>
<dbReference type="NCBIfam" id="NF001489">
    <property type="entry name" value="PRK00346.1-3"/>
    <property type="match status" value="1"/>
</dbReference>
<dbReference type="NCBIfam" id="NF001490">
    <property type="entry name" value="PRK00346.1-4"/>
    <property type="match status" value="1"/>
</dbReference>
<dbReference type="NCBIfam" id="TIGR00087">
    <property type="entry name" value="surE"/>
    <property type="match status" value="1"/>
</dbReference>
<dbReference type="PANTHER" id="PTHR30457">
    <property type="entry name" value="5'-NUCLEOTIDASE SURE"/>
    <property type="match status" value="1"/>
</dbReference>
<dbReference type="PANTHER" id="PTHR30457:SF12">
    <property type="entry name" value="5'_3'-NUCLEOTIDASE SURE"/>
    <property type="match status" value="1"/>
</dbReference>
<dbReference type="Pfam" id="PF01975">
    <property type="entry name" value="SurE"/>
    <property type="match status" value="1"/>
</dbReference>
<dbReference type="SUPFAM" id="SSF64167">
    <property type="entry name" value="SurE-like"/>
    <property type="match status" value="1"/>
</dbReference>
<gene>
    <name evidence="1" type="primary">surE</name>
    <name type="ordered locus">NE0950</name>
</gene>
<feature type="chain" id="PRO_0000111824" description="5'-nucleotidase SurE">
    <location>
        <begin position="1"/>
        <end position="247"/>
    </location>
</feature>
<feature type="binding site" evidence="1">
    <location>
        <position position="8"/>
    </location>
    <ligand>
        <name>a divalent metal cation</name>
        <dbReference type="ChEBI" id="CHEBI:60240"/>
    </ligand>
</feature>
<feature type="binding site" evidence="1">
    <location>
        <position position="9"/>
    </location>
    <ligand>
        <name>a divalent metal cation</name>
        <dbReference type="ChEBI" id="CHEBI:60240"/>
    </ligand>
</feature>
<feature type="binding site" evidence="1">
    <location>
        <position position="39"/>
    </location>
    <ligand>
        <name>a divalent metal cation</name>
        <dbReference type="ChEBI" id="CHEBI:60240"/>
    </ligand>
</feature>
<feature type="binding site" evidence="1">
    <location>
        <position position="91"/>
    </location>
    <ligand>
        <name>a divalent metal cation</name>
        <dbReference type="ChEBI" id="CHEBI:60240"/>
    </ligand>
</feature>
<proteinExistence type="inferred from homology"/>
<keyword id="KW-0963">Cytoplasm</keyword>
<keyword id="KW-0378">Hydrolase</keyword>
<keyword id="KW-0479">Metal-binding</keyword>
<keyword id="KW-0547">Nucleotide-binding</keyword>
<keyword id="KW-1185">Reference proteome</keyword>
<reference key="1">
    <citation type="journal article" date="2003" name="J. Bacteriol.">
        <title>Complete genome sequence of the ammonia-oxidizing bacterium and obligate chemolithoautotroph Nitrosomonas europaea.</title>
        <authorList>
            <person name="Chain P."/>
            <person name="Lamerdin J.E."/>
            <person name="Larimer F.W."/>
            <person name="Regala W."/>
            <person name="Lao V."/>
            <person name="Land M.L."/>
            <person name="Hauser L."/>
            <person name="Hooper A.B."/>
            <person name="Klotz M.G."/>
            <person name="Norton J."/>
            <person name="Sayavedra-Soto L.A."/>
            <person name="Arciero D.M."/>
            <person name="Hommes N.G."/>
            <person name="Whittaker M.M."/>
            <person name="Arp D.J."/>
        </authorList>
    </citation>
    <scope>NUCLEOTIDE SEQUENCE [LARGE SCALE GENOMIC DNA]</scope>
    <source>
        <strain>ATCC 19718 / CIP 103999 / KCTC 2705 / NBRC 14298</strain>
    </source>
</reference>
<comment type="function">
    <text evidence="1">Nucleotidase that shows phosphatase activity on nucleoside 5'-monophosphates.</text>
</comment>
<comment type="catalytic activity">
    <reaction evidence="1">
        <text>a ribonucleoside 5'-phosphate + H2O = a ribonucleoside + phosphate</text>
        <dbReference type="Rhea" id="RHEA:12484"/>
        <dbReference type="ChEBI" id="CHEBI:15377"/>
        <dbReference type="ChEBI" id="CHEBI:18254"/>
        <dbReference type="ChEBI" id="CHEBI:43474"/>
        <dbReference type="ChEBI" id="CHEBI:58043"/>
        <dbReference type="EC" id="3.1.3.5"/>
    </reaction>
</comment>
<comment type="cofactor">
    <cofactor evidence="1">
        <name>a divalent metal cation</name>
        <dbReference type="ChEBI" id="CHEBI:60240"/>
    </cofactor>
    <text evidence="1">Binds 1 divalent metal cation per subunit.</text>
</comment>
<comment type="subcellular location">
    <subcellularLocation>
        <location evidence="1">Cytoplasm</location>
    </subcellularLocation>
</comment>
<comment type="similarity">
    <text evidence="1">Belongs to the SurE nucleotidase family.</text>
</comment>
<evidence type="ECO:0000255" key="1">
    <source>
        <dbReference type="HAMAP-Rule" id="MF_00060"/>
    </source>
</evidence>